<dbReference type="EC" id="2.1.1.-" evidence="1"/>
<dbReference type="EMBL" id="AE016879">
    <property type="protein sequence ID" value="AAP29363.1"/>
    <property type="molecule type" value="Genomic_DNA"/>
</dbReference>
<dbReference type="EMBL" id="AE017334">
    <property type="protein sequence ID" value="AAT34892.1"/>
    <property type="molecule type" value="Genomic_DNA"/>
</dbReference>
<dbReference type="EMBL" id="AE017225">
    <property type="protein sequence ID" value="AAT57622.1"/>
    <property type="molecule type" value="Genomic_DNA"/>
</dbReference>
<dbReference type="RefSeq" id="NP_847877.1">
    <property type="nucleotide sequence ID" value="NC_003997.3"/>
</dbReference>
<dbReference type="RefSeq" id="WP_001019621.1">
    <property type="nucleotide sequence ID" value="NZ_WXXJ01000028.1"/>
</dbReference>
<dbReference type="RefSeq" id="YP_031572.1">
    <property type="nucleotide sequence ID" value="NC_005945.1"/>
</dbReference>
<dbReference type="SMR" id="Q81JH4"/>
<dbReference type="STRING" id="261594.GBAA_5732"/>
<dbReference type="DNASU" id="1085501"/>
<dbReference type="GeneID" id="93005640"/>
<dbReference type="KEGG" id="ban:BA_5732"/>
<dbReference type="KEGG" id="banh:HYU01_28000"/>
<dbReference type="KEGG" id="bar:GBAA_5732"/>
<dbReference type="KEGG" id="bat:BAS5335"/>
<dbReference type="PATRIC" id="fig|198094.11.peg.5693"/>
<dbReference type="eggNOG" id="COG0357">
    <property type="taxonomic scope" value="Bacteria"/>
</dbReference>
<dbReference type="HOGENOM" id="CLU_065341_0_2_9"/>
<dbReference type="OMA" id="AGMPNKK"/>
<dbReference type="OrthoDB" id="9808773at2"/>
<dbReference type="Proteomes" id="UP000000427">
    <property type="component" value="Chromosome"/>
</dbReference>
<dbReference type="Proteomes" id="UP000000594">
    <property type="component" value="Chromosome"/>
</dbReference>
<dbReference type="GO" id="GO:0005829">
    <property type="term" value="C:cytosol"/>
    <property type="evidence" value="ECO:0007669"/>
    <property type="project" value="TreeGrafter"/>
</dbReference>
<dbReference type="GO" id="GO:0070043">
    <property type="term" value="F:rRNA (guanine-N7-)-methyltransferase activity"/>
    <property type="evidence" value="ECO:0007669"/>
    <property type="project" value="UniProtKB-UniRule"/>
</dbReference>
<dbReference type="CDD" id="cd02440">
    <property type="entry name" value="AdoMet_MTases"/>
    <property type="match status" value="1"/>
</dbReference>
<dbReference type="FunFam" id="3.40.50.150:FF:000041">
    <property type="entry name" value="Ribosomal RNA small subunit methyltransferase G"/>
    <property type="match status" value="1"/>
</dbReference>
<dbReference type="Gene3D" id="3.40.50.150">
    <property type="entry name" value="Vaccinia Virus protein VP39"/>
    <property type="match status" value="1"/>
</dbReference>
<dbReference type="HAMAP" id="MF_00074">
    <property type="entry name" value="16SrRNA_methyltr_G"/>
    <property type="match status" value="1"/>
</dbReference>
<dbReference type="InterPro" id="IPR003682">
    <property type="entry name" value="rRNA_ssu_MeTfrase_G"/>
</dbReference>
<dbReference type="InterPro" id="IPR029063">
    <property type="entry name" value="SAM-dependent_MTases_sf"/>
</dbReference>
<dbReference type="NCBIfam" id="TIGR00138">
    <property type="entry name" value="rsmG_gidB"/>
    <property type="match status" value="1"/>
</dbReference>
<dbReference type="PANTHER" id="PTHR31760">
    <property type="entry name" value="S-ADENOSYL-L-METHIONINE-DEPENDENT METHYLTRANSFERASES SUPERFAMILY PROTEIN"/>
    <property type="match status" value="1"/>
</dbReference>
<dbReference type="PANTHER" id="PTHR31760:SF0">
    <property type="entry name" value="S-ADENOSYL-L-METHIONINE-DEPENDENT METHYLTRANSFERASES SUPERFAMILY PROTEIN"/>
    <property type="match status" value="1"/>
</dbReference>
<dbReference type="Pfam" id="PF02527">
    <property type="entry name" value="GidB"/>
    <property type="match status" value="1"/>
</dbReference>
<dbReference type="PIRSF" id="PIRSF003078">
    <property type="entry name" value="GidB"/>
    <property type="match status" value="1"/>
</dbReference>
<dbReference type="SUPFAM" id="SSF53335">
    <property type="entry name" value="S-adenosyl-L-methionine-dependent methyltransferases"/>
    <property type="match status" value="1"/>
</dbReference>
<keyword id="KW-0963">Cytoplasm</keyword>
<keyword id="KW-0489">Methyltransferase</keyword>
<keyword id="KW-1185">Reference proteome</keyword>
<keyword id="KW-0698">rRNA processing</keyword>
<keyword id="KW-0949">S-adenosyl-L-methionine</keyword>
<keyword id="KW-0808">Transferase</keyword>
<proteinExistence type="inferred from homology"/>
<evidence type="ECO:0000255" key="1">
    <source>
        <dbReference type="HAMAP-Rule" id="MF_00074"/>
    </source>
</evidence>
<feature type="chain" id="PRO_0000184209" description="Ribosomal RNA small subunit methyltransferase G">
    <location>
        <begin position="1"/>
        <end position="239"/>
    </location>
</feature>
<feature type="binding site" evidence="1">
    <location>
        <position position="77"/>
    </location>
    <ligand>
        <name>S-adenosyl-L-methionine</name>
        <dbReference type="ChEBI" id="CHEBI:59789"/>
    </ligand>
</feature>
<feature type="binding site" evidence="1">
    <location>
        <position position="82"/>
    </location>
    <ligand>
        <name>S-adenosyl-L-methionine</name>
        <dbReference type="ChEBI" id="CHEBI:59789"/>
    </ligand>
</feature>
<feature type="binding site" evidence="1">
    <location>
        <begin position="128"/>
        <end position="129"/>
    </location>
    <ligand>
        <name>S-adenosyl-L-methionine</name>
        <dbReference type="ChEBI" id="CHEBI:59789"/>
    </ligand>
</feature>
<feature type="binding site" evidence="1">
    <location>
        <position position="147"/>
    </location>
    <ligand>
        <name>S-adenosyl-L-methionine</name>
        <dbReference type="ChEBI" id="CHEBI:59789"/>
    </ligand>
</feature>
<protein>
    <recommendedName>
        <fullName evidence="1">Ribosomal RNA small subunit methyltransferase G</fullName>
        <ecNumber evidence="1">2.1.1.-</ecNumber>
    </recommendedName>
    <alternativeName>
        <fullName evidence="1">16S rRNA 7-methylguanosine methyltransferase</fullName>
        <shortName evidence="1">16S rRNA m7G methyltransferase</shortName>
    </alternativeName>
</protein>
<comment type="function">
    <text evidence="1">Specifically methylates the N7 position of guanine in position 535 of 16S rRNA.</text>
</comment>
<comment type="subcellular location">
    <subcellularLocation>
        <location evidence="1">Cytoplasm</location>
    </subcellularLocation>
</comment>
<comment type="similarity">
    <text evidence="1">Belongs to the methyltransferase superfamily. RNA methyltransferase RsmG family.</text>
</comment>
<name>RSMG_BACAN</name>
<organism>
    <name type="scientific">Bacillus anthracis</name>
    <dbReference type="NCBI Taxonomy" id="1392"/>
    <lineage>
        <taxon>Bacteria</taxon>
        <taxon>Bacillati</taxon>
        <taxon>Bacillota</taxon>
        <taxon>Bacilli</taxon>
        <taxon>Bacillales</taxon>
        <taxon>Bacillaceae</taxon>
        <taxon>Bacillus</taxon>
        <taxon>Bacillus cereus group</taxon>
    </lineage>
</organism>
<accession>Q81JH4</accession>
<accession>Q6HQ16</accession>
<accession>Q6KJG0</accession>
<gene>
    <name evidence="1" type="primary">rsmG</name>
    <name type="ordered locus">BA_5732</name>
    <name type="ordered locus">GBAA_5732</name>
    <name type="ordered locus">BAS5335</name>
</gene>
<reference key="1">
    <citation type="journal article" date="2003" name="Nature">
        <title>The genome sequence of Bacillus anthracis Ames and comparison to closely related bacteria.</title>
        <authorList>
            <person name="Read T.D."/>
            <person name="Peterson S.N."/>
            <person name="Tourasse N.J."/>
            <person name="Baillie L.W."/>
            <person name="Paulsen I.T."/>
            <person name="Nelson K.E."/>
            <person name="Tettelin H."/>
            <person name="Fouts D.E."/>
            <person name="Eisen J.A."/>
            <person name="Gill S.R."/>
            <person name="Holtzapple E.K."/>
            <person name="Okstad O.A."/>
            <person name="Helgason E."/>
            <person name="Rilstone J."/>
            <person name="Wu M."/>
            <person name="Kolonay J.F."/>
            <person name="Beanan M.J."/>
            <person name="Dodson R.J."/>
            <person name="Brinkac L.M."/>
            <person name="Gwinn M.L."/>
            <person name="DeBoy R.T."/>
            <person name="Madpu R."/>
            <person name="Daugherty S.C."/>
            <person name="Durkin A.S."/>
            <person name="Haft D.H."/>
            <person name="Nelson W.C."/>
            <person name="Peterson J.D."/>
            <person name="Pop M."/>
            <person name="Khouri H.M."/>
            <person name="Radune D."/>
            <person name="Benton J.L."/>
            <person name="Mahamoud Y."/>
            <person name="Jiang L."/>
            <person name="Hance I.R."/>
            <person name="Weidman J.F."/>
            <person name="Berry K.J."/>
            <person name="Plaut R.D."/>
            <person name="Wolf A.M."/>
            <person name="Watkins K.L."/>
            <person name="Nierman W.C."/>
            <person name="Hazen A."/>
            <person name="Cline R.T."/>
            <person name="Redmond C."/>
            <person name="Thwaite J.E."/>
            <person name="White O."/>
            <person name="Salzberg S.L."/>
            <person name="Thomason B."/>
            <person name="Friedlander A.M."/>
            <person name="Koehler T.M."/>
            <person name="Hanna P.C."/>
            <person name="Kolstoe A.-B."/>
            <person name="Fraser C.M."/>
        </authorList>
    </citation>
    <scope>NUCLEOTIDE SEQUENCE [LARGE SCALE GENOMIC DNA]</scope>
    <source>
        <strain>Ames / isolate Porton</strain>
    </source>
</reference>
<reference key="2">
    <citation type="journal article" date="2009" name="J. Bacteriol.">
        <title>The complete genome sequence of Bacillus anthracis Ames 'Ancestor'.</title>
        <authorList>
            <person name="Ravel J."/>
            <person name="Jiang L."/>
            <person name="Stanley S.T."/>
            <person name="Wilson M.R."/>
            <person name="Decker R.S."/>
            <person name="Read T.D."/>
            <person name="Worsham P."/>
            <person name="Keim P.S."/>
            <person name="Salzberg S.L."/>
            <person name="Fraser-Liggett C.M."/>
            <person name="Rasko D.A."/>
        </authorList>
    </citation>
    <scope>NUCLEOTIDE SEQUENCE [LARGE SCALE GENOMIC DNA]</scope>
    <source>
        <strain>Ames ancestor</strain>
    </source>
</reference>
<reference key="3">
    <citation type="submission" date="2004-01" db="EMBL/GenBank/DDBJ databases">
        <title>Complete genome sequence of Bacillus anthracis Sterne.</title>
        <authorList>
            <person name="Brettin T.S."/>
            <person name="Bruce D."/>
            <person name="Challacombe J.F."/>
            <person name="Gilna P."/>
            <person name="Han C."/>
            <person name="Hill K."/>
            <person name="Hitchcock P."/>
            <person name="Jackson P."/>
            <person name="Keim P."/>
            <person name="Longmire J."/>
            <person name="Lucas S."/>
            <person name="Okinaka R."/>
            <person name="Richardson P."/>
            <person name="Rubin E."/>
            <person name="Tice H."/>
        </authorList>
    </citation>
    <scope>NUCLEOTIDE SEQUENCE [LARGE SCALE GENOMIC DNA]</scope>
    <source>
        <strain>Sterne</strain>
    </source>
</reference>
<sequence>MNIEQFQSMLEEKGITLSSRQLEQFEIYFETLVEWNEKMNLTAITEKEEVYLKHFFDSITAAFYYDFSKPFSICDVGAGAGFPSIPLKICFPHLKVTIVDSLQKRINFLNHLAQKLELSDVAFCHDRAETFGKKEGVREAYDIVMARAVARLSVLSELCLPLVKVGGTFIAMKGAAANEEIENGKYALEVLGGDLKEMSTFQLPFEESERNILLIEKKRKTPKKYPRKPGTPNKLPIEK</sequence>